<comment type="subcellular location">
    <subcellularLocation>
        <location evidence="1">Cytoplasm</location>
    </subcellularLocation>
</comment>
<comment type="similarity">
    <text evidence="1">Belongs to the TACO1 family.</text>
</comment>
<feature type="chain" id="PRO_1000045381" description="Probable transcriptional regulatory protein SUN_1622">
    <location>
        <begin position="1"/>
        <end position="245"/>
    </location>
</feature>
<accession>A6QAR3</accession>
<sequence length="245" mass="27504">MGRAFEYRKAAKMKRWGTMSRVFPKLGKIITMAAKEGGLDPDMNPKLRTAILNAKAQNMPKDNIDAAIKRAAAKDAADIKEITYDVKAHYGVQMIVECATDNHTRTVANVKAILNRNGGEMLTSGSLNFMFTKKAVFVFDKTDDMDLEELELDLIDYGLEEIEEDVEPQENGNDKAIVRIYGEFTSFGELSKALEDKGIEVKKATIEYIANTPVELDEKQLEEIEALIDKLEDDEDVQNVFTNIN</sequence>
<protein>
    <recommendedName>
        <fullName evidence="1">Probable transcriptional regulatory protein SUN_1622</fullName>
    </recommendedName>
</protein>
<organism>
    <name type="scientific">Sulfurovum sp. (strain NBC37-1)</name>
    <dbReference type="NCBI Taxonomy" id="387093"/>
    <lineage>
        <taxon>Bacteria</taxon>
        <taxon>Pseudomonadati</taxon>
        <taxon>Campylobacterota</taxon>
        <taxon>Epsilonproteobacteria</taxon>
        <taxon>Campylobacterales</taxon>
        <taxon>Sulfurovaceae</taxon>
        <taxon>Sulfurovum</taxon>
    </lineage>
</organism>
<evidence type="ECO:0000255" key="1">
    <source>
        <dbReference type="HAMAP-Rule" id="MF_00693"/>
    </source>
</evidence>
<dbReference type="EMBL" id="AP009179">
    <property type="protein sequence ID" value="BAF72572.1"/>
    <property type="molecule type" value="Genomic_DNA"/>
</dbReference>
<dbReference type="RefSeq" id="WP_012083381.1">
    <property type="nucleotide sequence ID" value="NC_009663.1"/>
</dbReference>
<dbReference type="SMR" id="A6QAR3"/>
<dbReference type="STRING" id="387093.SUN_1622"/>
<dbReference type="KEGG" id="sun:SUN_1622"/>
<dbReference type="eggNOG" id="COG0217">
    <property type="taxonomic scope" value="Bacteria"/>
</dbReference>
<dbReference type="HOGENOM" id="CLU_062974_2_2_7"/>
<dbReference type="OrthoDB" id="9781053at2"/>
<dbReference type="Proteomes" id="UP000006378">
    <property type="component" value="Chromosome"/>
</dbReference>
<dbReference type="GO" id="GO:0005829">
    <property type="term" value="C:cytosol"/>
    <property type="evidence" value="ECO:0007669"/>
    <property type="project" value="TreeGrafter"/>
</dbReference>
<dbReference type="GO" id="GO:0003677">
    <property type="term" value="F:DNA binding"/>
    <property type="evidence" value="ECO:0007669"/>
    <property type="project" value="UniProtKB-UniRule"/>
</dbReference>
<dbReference type="GO" id="GO:0006355">
    <property type="term" value="P:regulation of DNA-templated transcription"/>
    <property type="evidence" value="ECO:0007669"/>
    <property type="project" value="UniProtKB-UniRule"/>
</dbReference>
<dbReference type="FunFam" id="1.10.10.200:FF:000004">
    <property type="entry name" value="Probable transcriptional regulatory protein BSBG_02618"/>
    <property type="match status" value="1"/>
</dbReference>
<dbReference type="Gene3D" id="1.10.10.200">
    <property type="match status" value="1"/>
</dbReference>
<dbReference type="Gene3D" id="3.30.70.980">
    <property type="match status" value="2"/>
</dbReference>
<dbReference type="HAMAP" id="MF_00693">
    <property type="entry name" value="Transcrip_reg_TACO1"/>
    <property type="match status" value="1"/>
</dbReference>
<dbReference type="InterPro" id="IPR017856">
    <property type="entry name" value="Integrase-like_N"/>
</dbReference>
<dbReference type="InterPro" id="IPR048300">
    <property type="entry name" value="TACO1_YebC-like_2nd/3rd_dom"/>
</dbReference>
<dbReference type="InterPro" id="IPR049083">
    <property type="entry name" value="TACO1_YebC_N"/>
</dbReference>
<dbReference type="InterPro" id="IPR002876">
    <property type="entry name" value="Transcrip_reg_TACO1-like"/>
</dbReference>
<dbReference type="InterPro" id="IPR026564">
    <property type="entry name" value="Transcrip_reg_TACO1-like_dom3"/>
</dbReference>
<dbReference type="InterPro" id="IPR029072">
    <property type="entry name" value="YebC-like"/>
</dbReference>
<dbReference type="NCBIfam" id="NF009044">
    <property type="entry name" value="PRK12378.1"/>
    <property type="match status" value="1"/>
</dbReference>
<dbReference type="NCBIfam" id="TIGR01033">
    <property type="entry name" value="YebC/PmpR family DNA-binding transcriptional regulator"/>
    <property type="match status" value="1"/>
</dbReference>
<dbReference type="PANTHER" id="PTHR12532:SF6">
    <property type="entry name" value="TRANSCRIPTIONAL REGULATORY PROTEIN YEBC-RELATED"/>
    <property type="match status" value="1"/>
</dbReference>
<dbReference type="PANTHER" id="PTHR12532">
    <property type="entry name" value="TRANSLATIONAL ACTIVATOR OF CYTOCHROME C OXIDASE 1"/>
    <property type="match status" value="1"/>
</dbReference>
<dbReference type="Pfam" id="PF20772">
    <property type="entry name" value="TACO1_YebC_N"/>
    <property type="match status" value="1"/>
</dbReference>
<dbReference type="Pfam" id="PF01709">
    <property type="entry name" value="Transcrip_reg"/>
    <property type="match status" value="1"/>
</dbReference>
<dbReference type="SUPFAM" id="SSF75625">
    <property type="entry name" value="YebC-like"/>
    <property type="match status" value="1"/>
</dbReference>
<name>Y1622_SULNB</name>
<gene>
    <name type="ordered locus">SUN_1622</name>
</gene>
<proteinExistence type="inferred from homology"/>
<reference key="1">
    <citation type="journal article" date="2007" name="Proc. Natl. Acad. Sci. U.S.A.">
        <title>Deep-sea vent epsilon-proteobacterial genomes provide insights into emergence of pathogens.</title>
        <authorList>
            <person name="Nakagawa S."/>
            <person name="Takaki Y."/>
            <person name="Shimamura S."/>
            <person name="Reysenbach A.-L."/>
            <person name="Takai K."/>
            <person name="Horikoshi K."/>
        </authorList>
    </citation>
    <scope>NUCLEOTIDE SEQUENCE [LARGE SCALE GENOMIC DNA]</scope>
    <source>
        <strain>NBC37-1</strain>
    </source>
</reference>
<keyword id="KW-0963">Cytoplasm</keyword>
<keyword id="KW-0238">DNA-binding</keyword>
<keyword id="KW-0804">Transcription</keyword>
<keyword id="KW-0805">Transcription regulation</keyword>